<reference key="1">
    <citation type="journal article" date="2003" name="Proc. Natl. Acad. Sci. U.S.A.">
        <title>The complete genome sequence of Chromobacterium violaceum reveals remarkable and exploitable bacterial adaptability.</title>
        <authorList>
            <person name="Vasconcelos A.T.R."/>
            <person name="de Almeida D.F."/>
            <person name="Hungria M."/>
            <person name="Guimaraes C.T."/>
            <person name="Antonio R.V."/>
            <person name="Almeida F.C."/>
            <person name="de Almeida L.G.P."/>
            <person name="de Almeida R."/>
            <person name="Alves-Gomes J.A."/>
            <person name="Andrade E.M."/>
            <person name="Araripe J."/>
            <person name="de Araujo M.F.F."/>
            <person name="Astolfi-Filho S."/>
            <person name="Azevedo V."/>
            <person name="Baptista A.J."/>
            <person name="Bataus L.A.M."/>
            <person name="Batista J.S."/>
            <person name="Belo A."/>
            <person name="van den Berg C."/>
            <person name="Bogo M."/>
            <person name="Bonatto S."/>
            <person name="Bordignon J."/>
            <person name="Brigido M.M."/>
            <person name="Brito C.A."/>
            <person name="Brocchi M."/>
            <person name="Burity H.A."/>
            <person name="Camargo A.A."/>
            <person name="Cardoso D.D.P."/>
            <person name="Carneiro N.P."/>
            <person name="Carraro D.M."/>
            <person name="Carvalho C.M.B."/>
            <person name="Cascardo J.C.M."/>
            <person name="Cavada B.S."/>
            <person name="Chueire L.M.O."/>
            <person name="Creczynski-Pasa T.B."/>
            <person name="Cunha-Junior N.C."/>
            <person name="Fagundes N."/>
            <person name="Falcao C.L."/>
            <person name="Fantinatti F."/>
            <person name="Farias I.P."/>
            <person name="Felipe M.S.S."/>
            <person name="Ferrari L.P."/>
            <person name="Ferro J.A."/>
            <person name="Ferro M.I.T."/>
            <person name="Franco G.R."/>
            <person name="Freitas N.S.A."/>
            <person name="Furlan L.R."/>
            <person name="Gazzinelli R.T."/>
            <person name="Gomes E.A."/>
            <person name="Goncalves P.R."/>
            <person name="Grangeiro T.B."/>
            <person name="Grattapaglia D."/>
            <person name="Grisard E.C."/>
            <person name="Hanna E.S."/>
            <person name="Jardim S.N."/>
            <person name="Laurino J."/>
            <person name="Leoi L.C.T."/>
            <person name="Lima L.F.A."/>
            <person name="Loureiro M.F."/>
            <person name="Lyra M.C.C.P."/>
            <person name="Madeira H.M.F."/>
            <person name="Manfio G.P."/>
            <person name="Maranhao A.Q."/>
            <person name="Martins W.S."/>
            <person name="di Mauro S.M.Z."/>
            <person name="de Medeiros S.R.B."/>
            <person name="Meissner R.V."/>
            <person name="Moreira M.A.M."/>
            <person name="Nascimento F.F."/>
            <person name="Nicolas M.F."/>
            <person name="Oliveira J.G."/>
            <person name="Oliveira S.C."/>
            <person name="Paixao R.F.C."/>
            <person name="Parente J.A."/>
            <person name="Pedrosa F.O."/>
            <person name="Pena S.D.J."/>
            <person name="Pereira J.O."/>
            <person name="Pereira M."/>
            <person name="Pinto L.S.R.C."/>
            <person name="Pinto L.S."/>
            <person name="Porto J.I.R."/>
            <person name="Potrich D.P."/>
            <person name="Ramalho-Neto C.E."/>
            <person name="Reis A.M.M."/>
            <person name="Rigo L.U."/>
            <person name="Rondinelli E."/>
            <person name="Santos E.B.P."/>
            <person name="Santos F.R."/>
            <person name="Schneider M.P.C."/>
            <person name="Seuanez H.N."/>
            <person name="Silva A.M.R."/>
            <person name="da Silva A.L.C."/>
            <person name="Silva D.W."/>
            <person name="Silva R."/>
            <person name="Simoes I.C."/>
            <person name="Simon D."/>
            <person name="Soares C.M.A."/>
            <person name="Soares R.B.A."/>
            <person name="Souza E.M."/>
            <person name="Souza K.R.L."/>
            <person name="Souza R.C."/>
            <person name="Steffens M.B.R."/>
            <person name="Steindel M."/>
            <person name="Teixeira S.R."/>
            <person name="Urmenyi T."/>
            <person name="Vettore A."/>
            <person name="Wassem R."/>
            <person name="Zaha A."/>
            <person name="Simpson A.J.G."/>
        </authorList>
    </citation>
    <scope>NUCLEOTIDE SEQUENCE [LARGE SCALE GENOMIC DNA]</scope>
    <source>
        <strain>ATCC 12472 / DSM 30191 / JCM 1249 / CCUG 213 / NBRC 12614 / NCIMB 9131 / NCTC 9757 / MK</strain>
    </source>
</reference>
<name>LIPB_CHRVO</name>
<organism>
    <name type="scientific">Chromobacterium violaceum (strain ATCC 12472 / DSM 30191 / JCM 1249 / CCUG 213 / NBRC 12614 / NCIMB 9131 / NCTC 9757 / MK)</name>
    <dbReference type="NCBI Taxonomy" id="243365"/>
    <lineage>
        <taxon>Bacteria</taxon>
        <taxon>Pseudomonadati</taxon>
        <taxon>Pseudomonadota</taxon>
        <taxon>Betaproteobacteria</taxon>
        <taxon>Neisseriales</taxon>
        <taxon>Chromobacteriaceae</taxon>
        <taxon>Chromobacterium</taxon>
    </lineage>
</organism>
<keyword id="KW-0012">Acyltransferase</keyword>
<keyword id="KW-0963">Cytoplasm</keyword>
<keyword id="KW-1185">Reference proteome</keyword>
<keyword id="KW-0808">Transferase</keyword>
<evidence type="ECO:0000255" key="1">
    <source>
        <dbReference type="HAMAP-Rule" id="MF_00013"/>
    </source>
</evidence>
<evidence type="ECO:0000255" key="2">
    <source>
        <dbReference type="PROSITE-ProRule" id="PRU01067"/>
    </source>
</evidence>
<comment type="function">
    <text evidence="1">Catalyzes the transfer of endogenously produced octanoic acid from octanoyl-acyl-carrier-protein onto the lipoyl domains of lipoate-dependent enzymes. Lipoyl-ACP can also act as a substrate although octanoyl-ACP is likely to be the physiological substrate.</text>
</comment>
<comment type="catalytic activity">
    <reaction evidence="1">
        <text>octanoyl-[ACP] + L-lysyl-[protein] = N(6)-octanoyl-L-lysyl-[protein] + holo-[ACP] + H(+)</text>
        <dbReference type="Rhea" id="RHEA:17665"/>
        <dbReference type="Rhea" id="RHEA-COMP:9636"/>
        <dbReference type="Rhea" id="RHEA-COMP:9685"/>
        <dbReference type="Rhea" id="RHEA-COMP:9752"/>
        <dbReference type="Rhea" id="RHEA-COMP:9928"/>
        <dbReference type="ChEBI" id="CHEBI:15378"/>
        <dbReference type="ChEBI" id="CHEBI:29969"/>
        <dbReference type="ChEBI" id="CHEBI:64479"/>
        <dbReference type="ChEBI" id="CHEBI:78463"/>
        <dbReference type="ChEBI" id="CHEBI:78809"/>
        <dbReference type="EC" id="2.3.1.181"/>
    </reaction>
</comment>
<comment type="pathway">
    <text evidence="1">Protein modification; protein lipoylation via endogenous pathway; protein N(6)-(lipoyl)lysine from octanoyl-[acyl-carrier-protein]: step 1/2.</text>
</comment>
<comment type="subcellular location">
    <subcellularLocation>
        <location evidence="1">Cytoplasm</location>
    </subcellularLocation>
</comment>
<comment type="miscellaneous">
    <text evidence="1">In the reaction, the free carboxyl group of octanoic acid is attached via an amide linkage to the epsilon-amino group of a specific lysine residue of lipoyl domains of lipoate-dependent enzymes.</text>
</comment>
<comment type="similarity">
    <text evidence="1">Belongs to the LipB family.</text>
</comment>
<feature type="chain" id="PRO_0000062826" description="Octanoyltransferase">
    <location>
        <begin position="1"/>
        <end position="207"/>
    </location>
</feature>
<feature type="domain" description="BPL/LPL catalytic" evidence="2">
    <location>
        <begin position="29"/>
        <end position="204"/>
    </location>
</feature>
<feature type="active site" description="Acyl-thioester intermediate" evidence="1">
    <location>
        <position position="166"/>
    </location>
</feature>
<feature type="binding site" evidence="1">
    <location>
        <begin position="68"/>
        <end position="75"/>
    </location>
    <ligand>
        <name>substrate</name>
    </ligand>
</feature>
<feature type="binding site" evidence="1">
    <location>
        <begin position="135"/>
        <end position="137"/>
    </location>
    <ligand>
        <name>substrate</name>
    </ligand>
</feature>
<feature type="binding site" evidence="1">
    <location>
        <begin position="148"/>
        <end position="150"/>
    </location>
    <ligand>
        <name>substrate</name>
    </ligand>
</feature>
<feature type="site" description="Lowers pKa of active site Cys" evidence="1">
    <location>
        <position position="132"/>
    </location>
</feature>
<sequence>MPRIIKHLGRVDYEPTWRAMQAFTDSRGAETRDELWVVEHPPVFTQGLAGKPEHLLQQNDVPVVKTDRGGQITYHGPGQLVVYLLVDFKRMHVGVRELVRRIEQAIIDMLAEQGIAANGDVDAPGVYVDGAKIASLGLRIKNGATYHGLSLNVDMDLTPFSWINPCGYANLKVTQMKNLGVNLTVAEAADKLLPHLERHLSTSKETA</sequence>
<gene>
    <name evidence="1" type="primary">lipB</name>
    <name type="ordered locus">CV_3096</name>
</gene>
<accession>Q7NTG0</accession>
<proteinExistence type="inferred from homology"/>
<dbReference type="EC" id="2.3.1.181" evidence="1"/>
<dbReference type="EMBL" id="AE016825">
    <property type="protein sequence ID" value="AAQ60764.1"/>
    <property type="molecule type" value="Genomic_DNA"/>
</dbReference>
<dbReference type="RefSeq" id="WP_011136643.1">
    <property type="nucleotide sequence ID" value="NC_005085.1"/>
</dbReference>
<dbReference type="SMR" id="Q7NTG0"/>
<dbReference type="STRING" id="243365.CV_3096"/>
<dbReference type="KEGG" id="cvi:CV_3096"/>
<dbReference type="eggNOG" id="COG0321">
    <property type="taxonomic scope" value="Bacteria"/>
</dbReference>
<dbReference type="HOGENOM" id="CLU_035168_3_1_4"/>
<dbReference type="OrthoDB" id="9787061at2"/>
<dbReference type="UniPathway" id="UPA00538">
    <property type="reaction ID" value="UER00592"/>
</dbReference>
<dbReference type="Proteomes" id="UP000001424">
    <property type="component" value="Chromosome"/>
</dbReference>
<dbReference type="GO" id="GO:0005737">
    <property type="term" value="C:cytoplasm"/>
    <property type="evidence" value="ECO:0007669"/>
    <property type="project" value="UniProtKB-SubCell"/>
</dbReference>
<dbReference type="GO" id="GO:0033819">
    <property type="term" value="F:lipoyl(octanoyl) transferase activity"/>
    <property type="evidence" value="ECO:0007669"/>
    <property type="project" value="UniProtKB-EC"/>
</dbReference>
<dbReference type="GO" id="GO:0036211">
    <property type="term" value="P:protein modification process"/>
    <property type="evidence" value="ECO:0007669"/>
    <property type="project" value="InterPro"/>
</dbReference>
<dbReference type="CDD" id="cd16444">
    <property type="entry name" value="LipB"/>
    <property type="match status" value="1"/>
</dbReference>
<dbReference type="FunFam" id="3.30.930.10:FF:000020">
    <property type="entry name" value="Octanoyltransferase"/>
    <property type="match status" value="1"/>
</dbReference>
<dbReference type="Gene3D" id="3.30.930.10">
    <property type="entry name" value="Bira Bifunctional Protein, Domain 2"/>
    <property type="match status" value="1"/>
</dbReference>
<dbReference type="HAMAP" id="MF_00013">
    <property type="entry name" value="LipB"/>
    <property type="match status" value="1"/>
</dbReference>
<dbReference type="InterPro" id="IPR045864">
    <property type="entry name" value="aa-tRNA-synth_II/BPL/LPL"/>
</dbReference>
<dbReference type="InterPro" id="IPR004143">
    <property type="entry name" value="BPL_LPL_catalytic"/>
</dbReference>
<dbReference type="InterPro" id="IPR000544">
    <property type="entry name" value="Octanoyltransferase"/>
</dbReference>
<dbReference type="InterPro" id="IPR020605">
    <property type="entry name" value="Octanoyltransferase_CS"/>
</dbReference>
<dbReference type="NCBIfam" id="TIGR00214">
    <property type="entry name" value="lipB"/>
    <property type="match status" value="1"/>
</dbReference>
<dbReference type="NCBIfam" id="NF010922">
    <property type="entry name" value="PRK14342.1"/>
    <property type="match status" value="1"/>
</dbReference>
<dbReference type="NCBIfam" id="NF010923">
    <property type="entry name" value="PRK14343.1"/>
    <property type="match status" value="1"/>
</dbReference>
<dbReference type="NCBIfam" id="NF010925">
    <property type="entry name" value="PRK14345.1"/>
    <property type="match status" value="1"/>
</dbReference>
<dbReference type="PANTHER" id="PTHR10993:SF7">
    <property type="entry name" value="LIPOYLTRANSFERASE 2, MITOCHONDRIAL-RELATED"/>
    <property type="match status" value="1"/>
</dbReference>
<dbReference type="PANTHER" id="PTHR10993">
    <property type="entry name" value="OCTANOYLTRANSFERASE"/>
    <property type="match status" value="1"/>
</dbReference>
<dbReference type="Pfam" id="PF21948">
    <property type="entry name" value="LplA-B_cat"/>
    <property type="match status" value="1"/>
</dbReference>
<dbReference type="PIRSF" id="PIRSF016262">
    <property type="entry name" value="LPLase"/>
    <property type="match status" value="1"/>
</dbReference>
<dbReference type="SUPFAM" id="SSF55681">
    <property type="entry name" value="Class II aaRS and biotin synthetases"/>
    <property type="match status" value="1"/>
</dbReference>
<dbReference type="PROSITE" id="PS51733">
    <property type="entry name" value="BPL_LPL_CATALYTIC"/>
    <property type="match status" value="1"/>
</dbReference>
<dbReference type="PROSITE" id="PS01313">
    <property type="entry name" value="LIPB"/>
    <property type="match status" value="1"/>
</dbReference>
<protein>
    <recommendedName>
        <fullName evidence="1">Octanoyltransferase</fullName>
        <ecNumber evidence="1">2.3.1.181</ecNumber>
    </recommendedName>
    <alternativeName>
        <fullName evidence="1">Lipoate-protein ligase B</fullName>
    </alternativeName>
    <alternativeName>
        <fullName evidence="1">Lipoyl/octanoyl transferase</fullName>
    </alternativeName>
    <alternativeName>
        <fullName evidence="1">Octanoyl-[acyl-carrier-protein]-protein N-octanoyltransferase</fullName>
    </alternativeName>
</protein>